<name>GLNB2_METTL</name>
<keyword id="KW-0535">Nitrogen fixation</keyword>
<keyword id="KW-0804">Transcription</keyword>
<keyword id="KW-0805">Transcription regulation</keyword>
<gene>
    <name type="primary">glnBB</name>
</gene>
<protein>
    <recommendedName>
        <fullName>Nitrogen fixation nifHD region GlnB-like protein 2</fullName>
    </recommendedName>
    <alternativeName>
        <fullName>ORF-128</fullName>
    </alternativeName>
</protein>
<dbReference type="EMBL" id="X13830">
    <property type="protein sequence ID" value="CAA32057.1"/>
    <property type="molecule type" value="Genomic_DNA"/>
</dbReference>
<dbReference type="PIR" id="S06986">
    <property type="entry name" value="S06986"/>
</dbReference>
<dbReference type="SMR" id="P25770"/>
<dbReference type="GO" id="GO:0005829">
    <property type="term" value="C:cytosol"/>
    <property type="evidence" value="ECO:0007669"/>
    <property type="project" value="TreeGrafter"/>
</dbReference>
<dbReference type="GO" id="GO:0005524">
    <property type="term" value="F:ATP binding"/>
    <property type="evidence" value="ECO:0007669"/>
    <property type="project" value="TreeGrafter"/>
</dbReference>
<dbReference type="GO" id="GO:0030234">
    <property type="term" value="F:enzyme regulator activity"/>
    <property type="evidence" value="ECO:0007669"/>
    <property type="project" value="InterPro"/>
</dbReference>
<dbReference type="GO" id="GO:0009399">
    <property type="term" value="P:nitrogen fixation"/>
    <property type="evidence" value="ECO:0007669"/>
    <property type="project" value="UniProtKB-KW"/>
</dbReference>
<dbReference type="GO" id="GO:0006808">
    <property type="term" value="P:regulation of nitrogen utilization"/>
    <property type="evidence" value="ECO:0007669"/>
    <property type="project" value="InterPro"/>
</dbReference>
<dbReference type="Gene3D" id="3.30.70.120">
    <property type="match status" value="1"/>
</dbReference>
<dbReference type="InterPro" id="IPR002187">
    <property type="entry name" value="N-reg_PII"/>
</dbReference>
<dbReference type="InterPro" id="IPR011322">
    <property type="entry name" value="N-reg_PII-like_a/b"/>
</dbReference>
<dbReference type="InterPro" id="IPR015867">
    <property type="entry name" value="N-reg_PII/ATP_PRibTrfase_C"/>
</dbReference>
<dbReference type="InterPro" id="IPR017918">
    <property type="entry name" value="N-reg_PII_CS"/>
</dbReference>
<dbReference type="PANTHER" id="PTHR30115">
    <property type="entry name" value="NITROGEN REGULATORY PROTEIN P-II"/>
    <property type="match status" value="1"/>
</dbReference>
<dbReference type="PANTHER" id="PTHR30115:SF11">
    <property type="entry name" value="NITROGEN REGULATORY PROTEIN P-II HOMOLOG"/>
    <property type="match status" value="1"/>
</dbReference>
<dbReference type="Pfam" id="PF00543">
    <property type="entry name" value="P-II"/>
    <property type="match status" value="1"/>
</dbReference>
<dbReference type="PRINTS" id="PR00340">
    <property type="entry name" value="PIIGLNB"/>
</dbReference>
<dbReference type="SMART" id="SM00938">
    <property type="entry name" value="P-II"/>
    <property type="match status" value="1"/>
</dbReference>
<dbReference type="SUPFAM" id="SSF54913">
    <property type="entry name" value="GlnB-like"/>
    <property type="match status" value="1"/>
</dbReference>
<dbReference type="PROSITE" id="PS00638">
    <property type="entry name" value="PII_GLNB_CTER"/>
    <property type="match status" value="1"/>
</dbReference>
<dbReference type="PROSITE" id="PS51343">
    <property type="entry name" value="PII_GLNB_DOM"/>
    <property type="match status" value="1"/>
</dbReference>
<sequence>MKEVIAIIRPNTVSKTVKALDVVGFPAVTMAECFGRGKQKGYFSANLPEIVDIQKIIEEGEKEGRFIKYIPKRLISIVVDDADVPLVVGIISKVNRTGSFGDGRIFVLPVEEAIRVRTGETGEIAIGN</sequence>
<accession>P25770</accession>
<reference key="1">
    <citation type="journal article" date="1989" name="Mol. Microbiol.">
        <title>Primary structure, functional organization and expression of nitrogenase structural genes of the thermophilic archaebacterium Methanococcus thermolithotrophicus.</title>
        <authorList>
            <person name="Souillard N."/>
            <person name="Sibold L."/>
        </authorList>
    </citation>
    <scope>NUCLEOTIDE SEQUENCE [GENOMIC DNA]</scope>
</reference>
<evidence type="ECO:0000255" key="1">
    <source>
        <dbReference type="PROSITE-ProRule" id="PRU00675"/>
    </source>
</evidence>
<organism>
    <name type="scientific">Methanothermococcus thermolithotrophicus</name>
    <name type="common">Methanococcus thermolithotrophicus</name>
    <dbReference type="NCBI Taxonomy" id="2186"/>
    <lineage>
        <taxon>Archaea</taxon>
        <taxon>Methanobacteriati</taxon>
        <taxon>Methanobacteriota</taxon>
        <taxon>Methanomada group</taxon>
        <taxon>Methanococci</taxon>
        <taxon>Methanococcales</taxon>
        <taxon>Methanococcaceae</taxon>
        <taxon>Methanothermococcus</taxon>
    </lineage>
</organism>
<proteinExistence type="inferred from homology"/>
<comment type="function">
    <text>Could be involved in the regulation of nitrogen fixation.</text>
</comment>
<comment type="similarity">
    <text evidence="1">Belongs to the P(II) protein family.</text>
</comment>
<feature type="chain" id="PRO_0000139813" description="Nitrogen fixation nifHD region GlnB-like protein 2">
    <location>
        <begin position="1"/>
        <end position="128"/>
    </location>
</feature>